<organism>
    <name type="scientific">Proteus mirabilis (strain HI4320)</name>
    <dbReference type="NCBI Taxonomy" id="529507"/>
    <lineage>
        <taxon>Bacteria</taxon>
        <taxon>Pseudomonadati</taxon>
        <taxon>Pseudomonadota</taxon>
        <taxon>Gammaproteobacteria</taxon>
        <taxon>Enterobacterales</taxon>
        <taxon>Morganellaceae</taxon>
        <taxon>Proteus</taxon>
    </lineage>
</organism>
<accession>B4EUT7</accession>
<keyword id="KW-0997">Cell inner membrane</keyword>
<keyword id="KW-1003">Cell membrane</keyword>
<keyword id="KW-0406">Ion transport</keyword>
<keyword id="KW-0472">Membrane</keyword>
<keyword id="KW-0520">NAD</keyword>
<keyword id="KW-1185">Reference proteome</keyword>
<keyword id="KW-0915">Sodium</keyword>
<keyword id="KW-0739">Sodium transport</keyword>
<keyword id="KW-1278">Translocase</keyword>
<keyword id="KW-0812">Transmembrane</keyword>
<keyword id="KW-1133">Transmembrane helix</keyword>
<keyword id="KW-0813">Transport</keyword>
<keyword id="KW-0830">Ubiquinone</keyword>
<proteinExistence type="inferred from homology"/>
<feature type="chain" id="PRO_1000191687" description="Na(+)-translocating NADH-quinone reductase subunit D">
    <location>
        <begin position="1"/>
        <end position="209"/>
    </location>
</feature>
<feature type="transmembrane region" description="Helical" evidence="1">
    <location>
        <begin position="42"/>
        <end position="62"/>
    </location>
</feature>
<feature type="transmembrane region" description="Helical" evidence="1">
    <location>
        <begin position="66"/>
        <end position="86"/>
    </location>
</feature>
<feature type="transmembrane region" description="Helical" evidence="1">
    <location>
        <begin position="103"/>
        <end position="123"/>
    </location>
</feature>
<feature type="transmembrane region" description="Helical" evidence="1">
    <location>
        <begin position="131"/>
        <end position="151"/>
    </location>
</feature>
<feature type="transmembrane region" description="Helical" evidence="1">
    <location>
        <begin position="178"/>
        <end position="198"/>
    </location>
</feature>
<dbReference type="EC" id="7.2.1.1" evidence="1"/>
<dbReference type="EMBL" id="AM942759">
    <property type="protein sequence ID" value="CAR40918.1"/>
    <property type="molecule type" value="Genomic_DNA"/>
</dbReference>
<dbReference type="RefSeq" id="WP_012367566.1">
    <property type="nucleotide sequence ID" value="NC_010554.1"/>
</dbReference>
<dbReference type="SMR" id="B4EUT7"/>
<dbReference type="EnsemblBacteria" id="CAR40918">
    <property type="protein sequence ID" value="CAR40918"/>
    <property type="gene ID" value="PMI0355"/>
</dbReference>
<dbReference type="GeneID" id="6801665"/>
<dbReference type="KEGG" id="pmr:PMI0355"/>
<dbReference type="eggNOG" id="COG1347">
    <property type="taxonomic scope" value="Bacteria"/>
</dbReference>
<dbReference type="HOGENOM" id="CLU_046659_1_1_6"/>
<dbReference type="Proteomes" id="UP000008319">
    <property type="component" value="Chromosome"/>
</dbReference>
<dbReference type="GO" id="GO:0005886">
    <property type="term" value="C:plasma membrane"/>
    <property type="evidence" value="ECO:0007669"/>
    <property type="project" value="UniProtKB-SubCell"/>
</dbReference>
<dbReference type="GO" id="GO:0016655">
    <property type="term" value="F:oxidoreductase activity, acting on NAD(P)H, quinone or similar compound as acceptor"/>
    <property type="evidence" value="ECO:0007669"/>
    <property type="project" value="UniProtKB-UniRule"/>
</dbReference>
<dbReference type="GO" id="GO:0006814">
    <property type="term" value="P:sodium ion transport"/>
    <property type="evidence" value="ECO:0007669"/>
    <property type="project" value="UniProtKB-UniRule"/>
</dbReference>
<dbReference type="HAMAP" id="MF_00428">
    <property type="entry name" value="NqrD"/>
    <property type="match status" value="1"/>
</dbReference>
<dbReference type="InterPro" id="IPR011292">
    <property type="entry name" value="NqrD"/>
</dbReference>
<dbReference type="InterPro" id="IPR003667">
    <property type="entry name" value="NqrDE/RnfAE"/>
</dbReference>
<dbReference type="NCBIfam" id="TIGR01939">
    <property type="entry name" value="nqrD"/>
    <property type="match status" value="1"/>
</dbReference>
<dbReference type="NCBIfam" id="NF006777">
    <property type="entry name" value="PRK09292.1"/>
    <property type="match status" value="1"/>
</dbReference>
<dbReference type="NCBIfam" id="NF009070">
    <property type="entry name" value="PRK12405.1"/>
    <property type="match status" value="1"/>
</dbReference>
<dbReference type="PANTHER" id="PTHR30586">
    <property type="entry name" value="ELECTRON TRANSPORT COMPLEX PROTEIN RNFE"/>
    <property type="match status" value="1"/>
</dbReference>
<dbReference type="PANTHER" id="PTHR30586:SF1">
    <property type="entry name" value="NA(+)-TRANSLOCATING NADH-QUINONE REDUCTASE SUBUNIT D"/>
    <property type="match status" value="1"/>
</dbReference>
<dbReference type="Pfam" id="PF02508">
    <property type="entry name" value="Rnf-Nqr"/>
    <property type="match status" value="1"/>
</dbReference>
<dbReference type="PIRSF" id="PIRSF006102">
    <property type="entry name" value="NQR_DE"/>
    <property type="match status" value="1"/>
</dbReference>
<comment type="function">
    <text evidence="1">NQR complex catalyzes the reduction of ubiquinone-1 to ubiquinol by two successive reactions, coupled with the transport of Na(+) ions from the cytoplasm to the periplasm. NqrA to NqrE are probably involved in the second step, the conversion of ubisemiquinone to ubiquinol.</text>
</comment>
<comment type="catalytic activity">
    <reaction evidence="1">
        <text>a ubiquinone + n Na(+)(in) + NADH + H(+) = a ubiquinol + n Na(+)(out) + NAD(+)</text>
        <dbReference type="Rhea" id="RHEA:47748"/>
        <dbReference type="Rhea" id="RHEA-COMP:9565"/>
        <dbReference type="Rhea" id="RHEA-COMP:9566"/>
        <dbReference type="ChEBI" id="CHEBI:15378"/>
        <dbReference type="ChEBI" id="CHEBI:16389"/>
        <dbReference type="ChEBI" id="CHEBI:17976"/>
        <dbReference type="ChEBI" id="CHEBI:29101"/>
        <dbReference type="ChEBI" id="CHEBI:57540"/>
        <dbReference type="ChEBI" id="CHEBI:57945"/>
        <dbReference type="EC" id="7.2.1.1"/>
    </reaction>
</comment>
<comment type="subunit">
    <text evidence="1">Composed of six subunits; NqrA, NqrB, NqrC, NqrD, NqrE and NqrF.</text>
</comment>
<comment type="subcellular location">
    <subcellularLocation>
        <location evidence="1">Cell inner membrane</location>
        <topology evidence="1">Multi-pass membrane protein</topology>
    </subcellularLocation>
</comment>
<comment type="similarity">
    <text evidence="1">Belongs to the NqrDE/RnfAE family.</text>
</comment>
<protein>
    <recommendedName>
        <fullName evidence="1">Na(+)-translocating NADH-quinone reductase subunit D</fullName>
        <shortName evidence="1">Na(+)-NQR subunit D</shortName>
        <shortName evidence="1">Na(+)-translocating NQR subunit D</shortName>
        <ecNumber evidence="1">7.2.1.1</ecNumber>
    </recommendedName>
    <alternativeName>
        <fullName evidence="1">NQR complex subunit D</fullName>
    </alternativeName>
    <alternativeName>
        <fullName evidence="1">NQR-1 subunit D</fullName>
    </alternativeName>
</protein>
<name>NQRD_PROMH</name>
<gene>
    <name evidence="1" type="primary">nqrD</name>
    <name type="ordered locus">PMI0355</name>
</gene>
<sequence>MADTKEIKRVLLGPLLDNNPIALQVLGVCSALAVTTKLETALVMTIAVTLVTAFSNFFISLIRNYIPGSVRIIVQMAIIASLVIVVDQVLQAYAYEISKQLSVFVGLIITNCIVMGRAEAYAMKSPPIESFMDGIGNGLGYGVILILVGFLRELFGSGKLFGITVMESIQNGGWYQPNGLFLLAPSAFFIIGLLIWGLRTLKPAQVEED</sequence>
<evidence type="ECO:0000255" key="1">
    <source>
        <dbReference type="HAMAP-Rule" id="MF_00428"/>
    </source>
</evidence>
<reference key="1">
    <citation type="journal article" date="2008" name="J. Bacteriol.">
        <title>Complete genome sequence of uropathogenic Proteus mirabilis, a master of both adherence and motility.</title>
        <authorList>
            <person name="Pearson M.M."/>
            <person name="Sebaihia M."/>
            <person name="Churcher C."/>
            <person name="Quail M.A."/>
            <person name="Seshasayee A.S."/>
            <person name="Luscombe N.M."/>
            <person name="Abdellah Z."/>
            <person name="Arrosmith C."/>
            <person name="Atkin B."/>
            <person name="Chillingworth T."/>
            <person name="Hauser H."/>
            <person name="Jagels K."/>
            <person name="Moule S."/>
            <person name="Mungall K."/>
            <person name="Norbertczak H."/>
            <person name="Rabbinowitsch E."/>
            <person name="Walker D."/>
            <person name="Whithead S."/>
            <person name="Thomson N.R."/>
            <person name="Rather P.N."/>
            <person name="Parkhill J."/>
            <person name="Mobley H.L.T."/>
        </authorList>
    </citation>
    <scope>NUCLEOTIDE SEQUENCE [LARGE SCALE GENOMIC DNA]</scope>
    <source>
        <strain>HI4320</strain>
    </source>
</reference>